<proteinExistence type="inferred from homology"/>
<dbReference type="EC" id="2.3.2.27" evidence="2"/>
<dbReference type="EC" id="3.6.4.-" evidence="2"/>
<dbReference type="EC" id="2.3.2.-" evidence="2"/>
<dbReference type="EMBL" id="CABZ01009724">
    <property type="status" value="NOT_ANNOTATED_CDS"/>
    <property type="molecule type" value="Genomic_DNA"/>
</dbReference>
<dbReference type="EMBL" id="CABZ01009732">
    <property type="status" value="NOT_ANNOTATED_CDS"/>
    <property type="molecule type" value="Genomic_DNA"/>
</dbReference>
<dbReference type="EMBL" id="CR759836">
    <property type="status" value="NOT_ANNOTATED_CDS"/>
    <property type="molecule type" value="Genomic_DNA"/>
</dbReference>
<dbReference type="RefSeq" id="NP_001340764.1">
    <property type="nucleotide sequence ID" value="NM_001353835.1"/>
</dbReference>
<dbReference type="RefSeq" id="XP_009298091.1">
    <property type="nucleotide sequence ID" value="XM_009299816.2"/>
</dbReference>
<dbReference type="SMR" id="A0A0R4IBK5"/>
<dbReference type="FunCoup" id="A0A0R4IBK5">
    <property type="interactions" value="228"/>
</dbReference>
<dbReference type="STRING" id="7955.ENSDARP00000130268"/>
<dbReference type="PaxDb" id="7955-ENSDARP00000103579"/>
<dbReference type="Ensembl" id="ENSDART00000168133">
    <property type="protein sequence ID" value="ENSDARP00000130268"/>
    <property type="gene ID" value="ENSDARG00000099465"/>
</dbReference>
<dbReference type="GeneID" id="503775"/>
<dbReference type="AGR" id="ZFIN:ZDB-GENE-050302-100"/>
<dbReference type="ZFIN" id="ZDB-GENE-050302-100">
    <property type="gene designation" value="rnf213a"/>
</dbReference>
<dbReference type="eggNOG" id="ENOG502QQ65">
    <property type="taxonomic scope" value="Eukaryota"/>
</dbReference>
<dbReference type="InParanoid" id="A0A0R4IBK5"/>
<dbReference type="OMA" id="YMKDMKN"/>
<dbReference type="OrthoDB" id="2423195at2759"/>
<dbReference type="Reactome" id="R-DRE-983168">
    <property type="pathway name" value="Antigen processing: Ubiquitination &amp; Proteasome degradation"/>
</dbReference>
<dbReference type="UniPathway" id="UPA00143"/>
<dbReference type="PRO" id="PR:A0A0R4IBK5"/>
<dbReference type="Proteomes" id="UP000000437">
    <property type="component" value="Chromosome 3"/>
</dbReference>
<dbReference type="Bgee" id="ENSDARG00000099465">
    <property type="expression patterns" value="Expressed in granulocyte and 20 other cell types or tissues"/>
</dbReference>
<dbReference type="GO" id="GO:0005829">
    <property type="term" value="C:cytosol"/>
    <property type="evidence" value="ECO:0000250"/>
    <property type="project" value="UniProtKB"/>
</dbReference>
<dbReference type="GO" id="GO:0005811">
    <property type="term" value="C:lipid droplet"/>
    <property type="evidence" value="ECO:0000250"/>
    <property type="project" value="UniProtKB"/>
</dbReference>
<dbReference type="GO" id="GO:0005730">
    <property type="term" value="C:nucleolus"/>
    <property type="evidence" value="ECO:0000318"/>
    <property type="project" value="GO_Central"/>
</dbReference>
<dbReference type="GO" id="GO:0005524">
    <property type="term" value="F:ATP binding"/>
    <property type="evidence" value="ECO:0007669"/>
    <property type="project" value="UniProtKB-KW"/>
</dbReference>
<dbReference type="GO" id="GO:0016887">
    <property type="term" value="F:ATP hydrolysis activity"/>
    <property type="evidence" value="ECO:0007669"/>
    <property type="project" value="InterPro"/>
</dbReference>
<dbReference type="GO" id="GO:0061630">
    <property type="term" value="F:ubiquitin protein ligase activity"/>
    <property type="evidence" value="ECO:0000250"/>
    <property type="project" value="UniProtKB"/>
</dbReference>
<dbReference type="GO" id="GO:0004842">
    <property type="term" value="F:ubiquitin-protein transferase activity"/>
    <property type="evidence" value="ECO:0000318"/>
    <property type="project" value="GO_Central"/>
</dbReference>
<dbReference type="GO" id="GO:0008270">
    <property type="term" value="F:zinc ion binding"/>
    <property type="evidence" value="ECO:0007669"/>
    <property type="project" value="UniProtKB-KW"/>
</dbReference>
<dbReference type="GO" id="GO:0008015">
    <property type="term" value="P:blood circulation"/>
    <property type="evidence" value="ECO:0000315"/>
    <property type="project" value="ZFIN"/>
</dbReference>
<dbReference type="GO" id="GO:0042742">
    <property type="term" value="P:defense response to bacterium"/>
    <property type="evidence" value="ECO:0000250"/>
    <property type="project" value="UniProtKB"/>
</dbReference>
<dbReference type="GO" id="GO:0002376">
    <property type="term" value="P:immune system process"/>
    <property type="evidence" value="ECO:0007669"/>
    <property type="project" value="UniProtKB-KW"/>
</dbReference>
<dbReference type="GO" id="GO:0140042">
    <property type="term" value="P:lipid droplet formation"/>
    <property type="evidence" value="ECO:0000315"/>
    <property type="project" value="UniProtKB"/>
</dbReference>
<dbReference type="GO" id="GO:0120323">
    <property type="term" value="P:lipid ubiquitination"/>
    <property type="evidence" value="ECO:0000250"/>
    <property type="project" value="UniProtKB"/>
</dbReference>
<dbReference type="GO" id="GO:2000051">
    <property type="term" value="P:negative regulation of non-canonical Wnt signaling pathway"/>
    <property type="evidence" value="ECO:0000318"/>
    <property type="project" value="GO_Central"/>
</dbReference>
<dbReference type="GO" id="GO:0070534">
    <property type="term" value="P:protein K63-linked ubiquitination"/>
    <property type="evidence" value="ECO:0000250"/>
    <property type="project" value="UniProtKB"/>
</dbReference>
<dbReference type="GO" id="GO:0045765">
    <property type="term" value="P:regulation of angiogenesis"/>
    <property type="evidence" value="ECO:0000315"/>
    <property type="project" value="ZFIN"/>
</dbReference>
<dbReference type="GO" id="GO:0019216">
    <property type="term" value="P:regulation of lipid metabolic process"/>
    <property type="evidence" value="ECO:0000250"/>
    <property type="project" value="UniProtKB"/>
</dbReference>
<dbReference type="GO" id="GO:0002040">
    <property type="term" value="P:sprouting angiogenesis"/>
    <property type="evidence" value="ECO:0000315"/>
    <property type="project" value="ZFIN"/>
</dbReference>
<dbReference type="GO" id="GO:0006511">
    <property type="term" value="P:ubiquitin-dependent protein catabolic process"/>
    <property type="evidence" value="ECO:0000318"/>
    <property type="project" value="GO_Central"/>
</dbReference>
<dbReference type="GO" id="GO:0098792">
    <property type="term" value="P:xenophagy"/>
    <property type="evidence" value="ECO:0000250"/>
    <property type="project" value="UniProtKB"/>
</dbReference>
<dbReference type="CDD" id="cd16561">
    <property type="entry name" value="RING-HC_RNF213"/>
    <property type="match status" value="1"/>
</dbReference>
<dbReference type="FunFam" id="3.30.40.10:FF:000488">
    <property type="entry name" value="E3 ubiquitin-protein ligase RNF213"/>
    <property type="match status" value="1"/>
</dbReference>
<dbReference type="FunFam" id="3.40.50.300:FF:000491">
    <property type="entry name" value="E3 ubiquitin-protein ligase RNF213"/>
    <property type="match status" value="1"/>
</dbReference>
<dbReference type="FunFam" id="3.40.50.300:FF:000804">
    <property type="entry name" value="E3 ubiquitin-protein ligase RNF213"/>
    <property type="match status" value="1"/>
</dbReference>
<dbReference type="Gene3D" id="3.40.50.300">
    <property type="entry name" value="P-loop containing nucleotide triphosphate hydrolases"/>
    <property type="match status" value="2"/>
</dbReference>
<dbReference type="Gene3D" id="3.30.40.10">
    <property type="entry name" value="Zinc/RING finger domain, C3HC4 (zinc finger)"/>
    <property type="match status" value="1"/>
</dbReference>
<dbReference type="InterPro" id="IPR003593">
    <property type="entry name" value="AAA+_ATPase"/>
</dbReference>
<dbReference type="InterPro" id="IPR027417">
    <property type="entry name" value="P-loop_NTPase"/>
</dbReference>
<dbReference type="InterPro" id="IPR031248">
    <property type="entry name" value="RNF213"/>
</dbReference>
<dbReference type="InterPro" id="IPR046439">
    <property type="entry name" value="ZF_RZ_dom"/>
</dbReference>
<dbReference type="InterPro" id="IPR018957">
    <property type="entry name" value="Znf_C3HC4_RING-type"/>
</dbReference>
<dbReference type="InterPro" id="IPR001841">
    <property type="entry name" value="Znf_RING"/>
</dbReference>
<dbReference type="InterPro" id="IPR013083">
    <property type="entry name" value="Znf_RING/FYVE/PHD"/>
</dbReference>
<dbReference type="InterPro" id="IPR017907">
    <property type="entry name" value="Znf_RING_CS"/>
</dbReference>
<dbReference type="PANTHER" id="PTHR22605:SF18">
    <property type="entry name" value="E3 UBIQUITIN-PROTEIN LIGASE RNF213-ALPHA"/>
    <property type="match status" value="1"/>
</dbReference>
<dbReference type="PANTHER" id="PTHR22605">
    <property type="entry name" value="RZ-TYPE DOMAIN-CONTAINING PROTEIN"/>
    <property type="match status" value="1"/>
</dbReference>
<dbReference type="Pfam" id="PF00097">
    <property type="entry name" value="zf-C3HC4"/>
    <property type="match status" value="1"/>
</dbReference>
<dbReference type="Pfam" id="PF20173">
    <property type="entry name" value="ZnF_RZ-type"/>
    <property type="match status" value="1"/>
</dbReference>
<dbReference type="SMART" id="SM00382">
    <property type="entry name" value="AAA"/>
    <property type="match status" value="2"/>
</dbReference>
<dbReference type="SMART" id="SM00184">
    <property type="entry name" value="RING"/>
    <property type="match status" value="2"/>
</dbReference>
<dbReference type="SUPFAM" id="SSF52540">
    <property type="entry name" value="P-loop containing nucleoside triphosphate hydrolases"/>
    <property type="match status" value="2"/>
</dbReference>
<dbReference type="SUPFAM" id="SSF57850">
    <property type="entry name" value="RING/U-box"/>
    <property type="match status" value="1"/>
</dbReference>
<dbReference type="PROSITE" id="PS00518">
    <property type="entry name" value="ZF_RING_1"/>
    <property type="match status" value="1"/>
</dbReference>
<dbReference type="PROSITE" id="PS50089">
    <property type="entry name" value="ZF_RING_2"/>
    <property type="match status" value="1"/>
</dbReference>
<dbReference type="PROSITE" id="PS51981">
    <property type="entry name" value="ZF_RZ"/>
    <property type="match status" value="1"/>
</dbReference>
<organism>
    <name type="scientific">Danio rerio</name>
    <name type="common">Zebrafish</name>
    <name type="synonym">Brachydanio rerio</name>
    <dbReference type="NCBI Taxonomy" id="7955"/>
    <lineage>
        <taxon>Eukaryota</taxon>
        <taxon>Metazoa</taxon>
        <taxon>Chordata</taxon>
        <taxon>Craniata</taxon>
        <taxon>Vertebrata</taxon>
        <taxon>Euteleostomi</taxon>
        <taxon>Actinopterygii</taxon>
        <taxon>Neopterygii</taxon>
        <taxon>Teleostei</taxon>
        <taxon>Ostariophysi</taxon>
        <taxon>Cypriniformes</taxon>
        <taxon>Danionidae</taxon>
        <taxon>Danioninae</taxon>
        <taxon>Danio</taxon>
    </lineage>
</organism>
<comment type="function">
    <text evidence="2 7 9">Atypical E3 ubiquitin ligase that can catalyze ubiquitination of both proteins and lipids, and which is involved in various processes, such as lipid metabolism, angiogenesis and cell-autonomous immunity (By similarity). Acts as a key immune sensor by catalyzing ubiquitination of the lipid A moiety of bacterial lipopolysaccharide (LPS) via its RZ-type zinc-finger: restricts the proliferation of cytosolic bacteria, such as Salmonella, by generating the bacterial ubiquitin coat through the ubiquitination of LPS (By similarity). Ubiquitination of LPS triggers cell-autonomous immunity, such as antibacterial autophagy, leading to degradation of the microbial invader (By similarity). Involved in lipid metabolism by regulating fat storage and lipid droplet formation; act by inhibiting the lipolytic process (PubMed:30705059). Also regulates lipotoxicity by inhibiting desaturation of fatty acids (By similarity). Also acts as an E3 ubiquitin-protein ligase via its RING-type zinc finger (By similarity). Involved in the non-canonical Wnt signaling pathway in vascular development: acts by mediating ubiquitination and degradation of proteins downstream of rspo3, leading to inhibit the non-canonical Wnt signaling pathway and promoting vessel regression (By similarity). Also has ATPase activity; ATPase activity is required for ubiquitination of LPS (By similarity). Also involved in neuromuscular regulation (PubMed:26530008).</text>
</comment>
<comment type="catalytic activity">
    <reaction evidence="2">
        <text>S-ubiquitinyl-[E2 ubiquitin-conjugating enzyme]-L-cysteine + [acceptor protein]-L-lysine = [E2 ubiquitin-conjugating enzyme]-L-cysteine + N(6)-ubiquitinyl-[acceptor protein]-L-lysine.</text>
        <dbReference type="EC" id="2.3.2.27"/>
    </reaction>
</comment>
<comment type="catalytic activity">
    <reaction evidence="2">
        <text>ATP + H2O = ADP + phosphate + H(+)</text>
        <dbReference type="Rhea" id="RHEA:13065"/>
        <dbReference type="ChEBI" id="CHEBI:15377"/>
        <dbReference type="ChEBI" id="CHEBI:15378"/>
        <dbReference type="ChEBI" id="CHEBI:30616"/>
        <dbReference type="ChEBI" id="CHEBI:43474"/>
        <dbReference type="ChEBI" id="CHEBI:456216"/>
    </reaction>
    <physiologicalReaction direction="left-to-right" evidence="2">
        <dbReference type="Rhea" id="RHEA:13066"/>
    </physiologicalReaction>
</comment>
<comment type="pathway">
    <text evidence="2">Protein modification; protein ubiquitination.</text>
</comment>
<comment type="subcellular location">
    <subcellularLocation>
        <location evidence="2">Cytoplasm</location>
        <location evidence="2">Cytosol</location>
    </subcellularLocation>
    <subcellularLocation>
        <location evidence="2">Lipid droplet</location>
    </subcellularLocation>
</comment>
<comment type="domain">
    <text evidence="1">Composed of an N-terminal stalk, a dynein-like core comprised of two catalytically active and four inactive ATPase domains, and a C-terminal E3 module. The ATPase regions do not generate movement but rather act like an intricate molecular 'switch'.</text>
</comment>
<comment type="domain">
    <text evidence="2">The RING-type zinc finger domain is required for the ubiquitin-protein ligase activity.</text>
</comment>
<comment type="domain">
    <text evidence="2">The RZ-type (RNF213-ZNFX1) zinc-finger is required for the ubiquitination of the lipid A moiety of bacterial lipopolysaccharide (LPS).</text>
</comment>
<comment type="disruption phenotype">
    <text evidence="6 7 8 9">Morpholino knockdown leads to a slight reduction in body size, a small eye and a wavy trunk (PubMed:21799892). Fishes develope abnormal angiogenesis in intersegmental vessels and cranial secondary vessels (PubMed:21799892, PubMed:27125596). Abnormal sprouting vessels are observed in the trunk and head regions, while axial trunk vessels, the dorsal aorta and posterior cardinal vein proceed almost normally (PubMed:21799892). Morpholino knockdown in larvae leads to a reduction in fast myofibrils and immature projection of primary motoneurons, leading to severe motor deficits (PubMed:26530008). Decreased lipid droplet formation (PubMed:30705059).</text>
</comment>
<comment type="similarity">
    <text evidence="14">Belongs to the AAA ATPase family.</text>
</comment>
<name>R213A_DANRE</name>
<feature type="chain" id="PRO_0000435804" description="E3 ubiquitin-protein ligase rnf213-alpha">
    <location>
        <begin position="1"/>
        <end position="5209"/>
    </location>
</feature>
<feature type="zinc finger region" description="RING-type" evidence="3">
    <location>
        <begin position="4005"/>
        <end position="4043"/>
    </location>
</feature>
<feature type="zinc finger region" description="RZ-type" evidence="4">
    <location>
        <begin position="4487"/>
        <end position="4557"/>
    </location>
</feature>
<feature type="region of interest" description="Disordered" evidence="5">
    <location>
        <begin position="27"/>
        <end position="373"/>
    </location>
</feature>
<feature type="compositionally biased region" description="Polar residues" evidence="5">
    <location>
        <begin position="27"/>
        <end position="52"/>
    </location>
</feature>
<feature type="compositionally biased region" description="Polar residues" evidence="5">
    <location>
        <begin position="61"/>
        <end position="72"/>
    </location>
</feature>
<feature type="compositionally biased region" description="Basic residues" evidence="5">
    <location>
        <begin position="85"/>
        <end position="101"/>
    </location>
</feature>
<feature type="compositionally biased region" description="Low complexity" evidence="5">
    <location>
        <begin position="108"/>
        <end position="118"/>
    </location>
</feature>
<feature type="compositionally biased region" description="Basic and acidic residues" evidence="5">
    <location>
        <begin position="119"/>
        <end position="128"/>
    </location>
</feature>
<feature type="compositionally biased region" description="Polar residues" evidence="5">
    <location>
        <begin position="167"/>
        <end position="177"/>
    </location>
</feature>
<feature type="compositionally biased region" description="Polar residues" evidence="5">
    <location>
        <begin position="184"/>
        <end position="195"/>
    </location>
</feature>
<feature type="compositionally biased region" description="Basic and acidic residues" evidence="5">
    <location>
        <begin position="205"/>
        <end position="218"/>
    </location>
</feature>
<feature type="compositionally biased region" description="Polar residues" evidence="5">
    <location>
        <begin position="219"/>
        <end position="243"/>
    </location>
</feature>
<feature type="compositionally biased region" description="Low complexity" evidence="5">
    <location>
        <begin position="256"/>
        <end position="269"/>
    </location>
</feature>
<feature type="compositionally biased region" description="Basic and acidic residues" evidence="5">
    <location>
        <begin position="271"/>
        <end position="288"/>
    </location>
</feature>
<feature type="compositionally biased region" description="Basic and acidic residues" evidence="5">
    <location>
        <begin position="330"/>
        <end position="352"/>
    </location>
</feature>
<feature type="active site" description="Nucleophile; for E3 ubiquitin-lipopolysaccharide ligase activity" evidence="4">
    <location>
        <position position="4518"/>
    </location>
</feature>
<feature type="binding site" evidence="1">
    <location>
        <begin position="2036"/>
        <end position="2041"/>
    </location>
    <ligand>
        <name>ATP</name>
        <dbReference type="ChEBI" id="CHEBI:30616"/>
    </ligand>
</feature>
<feature type="binding site" evidence="1">
    <location>
        <position position="2135"/>
    </location>
    <ligand>
        <name>ATP</name>
        <dbReference type="ChEBI" id="CHEBI:30616"/>
    </ligand>
</feature>
<feature type="binding site" evidence="1">
    <location>
        <position position="2193"/>
    </location>
    <ligand>
        <name>ATP</name>
        <dbReference type="ChEBI" id="CHEBI:30616"/>
    </ligand>
</feature>
<feature type="binding site" evidence="1">
    <location>
        <position position="2252"/>
    </location>
    <ligand>
        <name>ATP</name>
        <dbReference type="ChEBI" id="CHEBI:30616"/>
    </ligand>
</feature>
<feature type="binding site" evidence="1">
    <location>
        <position position="2535"/>
    </location>
    <ligand>
        <name>ATP</name>
        <dbReference type="ChEBI" id="CHEBI:30616"/>
    </ligand>
</feature>
<feature type="binding site" evidence="1">
    <location>
        <position position="2610"/>
    </location>
    <ligand>
        <name>ATP</name>
        <dbReference type="ChEBI" id="CHEBI:30616"/>
    </ligand>
</feature>
<feature type="binding site" evidence="1">
    <location>
        <position position="4005"/>
    </location>
    <ligand>
        <name>Zn(2+)</name>
        <dbReference type="ChEBI" id="CHEBI:29105"/>
        <label>1</label>
    </ligand>
</feature>
<feature type="binding site" evidence="1">
    <location>
        <position position="4008"/>
    </location>
    <ligand>
        <name>Zn(2+)</name>
        <dbReference type="ChEBI" id="CHEBI:29105"/>
        <label>1</label>
    </ligand>
</feature>
<feature type="binding site" evidence="1">
    <location>
        <position position="4020"/>
    </location>
    <ligand>
        <name>Zn(2+)</name>
        <dbReference type="ChEBI" id="CHEBI:29105"/>
        <label>2</label>
    </ligand>
</feature>
<feature type="binding site" evidence="1">
    <location>
        <position position="4022"/>
    </location>
    <ligand>
        <name>Zn(2+)</name>
        <dbReference type="ChEBI" id="CHEBI:29105"/>
        <label>2</label>
    </ligand>
</feature>
<feature type="binding site" evidence="1">
    <location>
        <position position="4025"/>
    </location>
    <ligand>
        <name>Zn(2+)</name>
        <dbReference type="ChEBI" id="CHEBI:29105"/>
        <label>1</label>
    </ligand>
</feature>
<feature type="binding site" evidence="1">
    <location>
        <position position="4028"/>
    </location>
    <ligand>
        <name>Zn(2+)</name>
        <dbReference type="ChEBI" id="CHEBI:29105"/>
        <label>1</label>
    </ligand>
</feature>
<feature type="binding site" evidence="1">
    <location>
        <position position="4040"/>
    </location>
    <ligand>
        <name>Zn(2+)</name>
        <dbReference type="ChEBI" id="CHEBI:29105"/>
        <label>2</label>
    </ligand>
</feature>
<feature type="binding site" evidence="1">
    <location>
        <position position="4043"/>
    </location>
    <ligand>
        <name>Zn(2+)</name>
        <dbReference type="ChEBI" id="CHEBI:29105"/>
        <label>2</label>
    </ligand>
</feature>
<feature type="binding site" evidence="4">
    <location>
        <position position="4507"/>
    </location>
    <ligand>
        <name>Zn(2+)</name>
        <dbReference type="ChEBI" id="CHEBI:29105"/>
        <label>3</label>
    </ligand>
</feature>
<feature type="binding site" evidence="4">
    <location>
        <position position="4511"/>
    </location>
    <ligand>
        <name>Zn(2+)</name>
        <dbReference type="ChEBI" id="CHEBI:29105"/>
        <label>3</label>
    </ligand>
</feature>
<feature type="binding site" evidence="4">
    <location>
        <position position="4527"/>
    </location>
    <ligand>
        <name>Zn(2+)</name>
        <dbReference type="ChEBI" id="CHEBI:29105"/>
        <label>3</label>
    </ligand>
</feature>
<feature type="binding site" evidence="4">
    <location>
        <position position="4530"/>
    </location>
    <ligand>
        <name>Zn(2+)</name>
        <dbReference type="ChEBI" id="CHEBI:29105"/>
        <label>3</label>
    </ligand>
</feature>
<reference key="1">
    <citation type="journal article" date="2013" name="Nature">
        <title>The zebrafish reference genome sequence and its relationship to the human genome.</title>
        <authorList>
            <person name="Howe K."/>
            <person name="Clark M.D."/>
            <person name="Torroja C.F."/>
            <person name="Torrance J."/>
            <person name="Berthelot C."/>
            <person name="Muffato M."/>
            <person name="Collins J.E."/>
            <person name="Humphray S."/>
            <person name="McLaren K."/>
            <person name="Matthews L."/>
            <person name="McLaren S."/>
            <person name="Sealy I."/>
            <person name="Caccamo M."/>
            <person name="Churcher C."/>
            <person name="Scott C."/>
            <person name="Barrett J.C."/>
            <person name="Koch R."/>
            <person name="Rauch G.J."/>
            <person name="White S."/>
            <person name="Chow W."/>
            <person name="Kilian B."/>
            <person name="Quintais L.T."/>
            <person name="Guerra-Assuncao J.A."/>
            <person name="Zhou Y."/>
            <person name="Gu Y."/>
            <person name="Yen J."/>
            <person name="Vogel J.H."/>
            <person name="Eyre T."/>
            <person name="Redmond S."/>
            <person name="Banerjee R."/>
            <person name="Chi J."/>
            <person name="Fu B."/>
            <person name="Langley E."/>
            <person name="Maguire S.F."/>
            <person name="Laird G.K."/>
            <person name="Lloyd D."/>
            <person name="Kenyon E."/>
            <person name="Donaldson S."/>
            <person name="Sehra H."/>
            <person name="Almeida-King J."/>
            <person name="Loveland J."/>
            <person name="Trevanion S."/>
            <person name="Jones M."/>
            <person name="Quail M."/>
            <person name="Willey D."/>
            <person name="Hunt A."/>
            <person name="Burton J."/>
            <person name="Sims S."/>
            <person name="McLay K."/>
            <person name="Plumb B."/>
            <person name="Davis J."/>
            <person name="Clee C."/>
            <person name="Oliver K."/>
            <person name="Clark R."/>
            <person name="Riddle C."/>
            <person name="Elliot D."/>
            <person name="Threadgold G."/>
            <person name="Harden G."/>
            <person name="Ware D."/>
            <person name="Begum S."/>
            <person name="Mortimore B."/>
            <person name="Kerry G."/>
            <person name="Heath P."/>
            <person name="Phillimore B."/>
            <person name="Tracey A."/>
            <person name="Corby N."/>
            <person name="Dunn M."/>
            <person name="Johnson C."/>
            <person name="Wood J."/>
            <person name="Clark S."/>
            <person name="Pelan S."/>
            <person name="Griffiths G."/>
            <person name="Smith M."/>
            <person name="Glithero R."/>
            <person name="Howden P."/>
            <person name="Barker N."/>
            <person name="Lloyd C."/>
            <person name="Stevens C."/>
            <person name="Harley J."/>
            <person name="Holt K."/>
            <person name="Panagiotidis G."/>
            <person name="Lovell J."/>
            <person name="Beasley H."/>
            <person name="Henderson C."/>
            <person name="Gordon D."/>
            <person name="Auger K."/>
            <person name="Wright D."/>
            <person name="Collins J."/>
            <person name="Raisen C."/>
            <person name="Dyer L."/>
            <person name="Leung K."/>
            <person name="Robertson L."/>
            <person name="Ambridge K."/>
            <person name="Leongamornlert D."/>
            <person name="McGuire S."/>
            <person name="Gilderthorp R."/>
            <person name="Griffiths C."/>
            <person name="Manthravadi D."/>
            <person name="Nichol S."/>
            <person name="Barker G."/>
            <person name="Whitehead S."/>
            <person name="Kay M."/>
            <person name="Brown J."/>
            <person name="Murnane C."/>
            <person name="Gray E."/>
            <person name="Humphries M."/>
            <person name="Sycamore N."/>
            <person name="Barker D."/>
            <person name="Saunders D."/>
            <person name="Wallis J."/>
            <person name="Babbage A."/>
            <person name="Hammond S."/>
            <person name="Mashreghi-Mohammadi M."/>
            <person name="Barr L."/>
            <person name="Martin S."/>
            <person name="Wray P."/>
            <person name="Ellington A."/>
            <person name="Matthews N."/>
            <person name="Ellwood M."/>
            <person name="Woodmansey R."/>
            <person name="Clark G."/>
            <person name="Cooper J."/>
            <person name="Tromans A."/>
            <person name="Grafham D."/>
            <person name="Skuce C."/>
            <person name="Pandian R."/>
            <person name="Andrews R."/>
            <person name="Harrison E."/>
            <person name="Kimberley A."/>
            <person name="Garnett J."/>
            <person name="Fosker N."/>
            <person name="Hall R."/>
            <person name="Garner P."/>
            <person name="Kelly D."/>
            <person name="Bird C."/>
            <person name="Palmer S."/>
            <person name="Gehring I."/>
            <person name="Berger A."/>
            <person name="Dooley C.M."/>
            <person name="Ersan-Urun Z."/>
            <person name="Eser C."/>
            <person name="Geiger H."/>
            <person name="Geisler M."/>
            <person name="Karotki L."/>
            <person name="Kirn A."/>
            <person name="Konantz J."/>
            <person name="Konantz M."/>
            <person name="Oberlander M."/>
            <person name="Rudolph-Geiger S."/>
            <person name="Teucke M."/>
            <person name="Lanz C."/>
            <person name="Raddatz G."/>
            <person name="Osoegawa K."/>
            <person name="Zhu B."/>
            <person name="Rapp A."/>
            <person name="Widaa S."/>
            <person name="Langford C."/>
            <person name="Yang F."/>
            <person name="Schuster S.C."/>
            <person name="Carter N.P."/>
            <person name="Harrow J."/>
            <person name="Ning Z."/>
            <person name="Herrero J."/>
            <person name="Searle S.M."/>
            <person name="Enright A."/>
            <person name="Geisler R."/>
            <person name="Plasterk R.H."/>
            <person name="Lee C."/>
            <person name="Westerfield M."/>
            <person name="de Jong P.J."/>
            <person name="Zon L.I."/>
            <person name="Postlethwait J.H."/>
            <person name="Nusslein-Volhard C."/>
            <person name="Hubbard T.J."/>
            <person name="Roest Crollius H."/>
            <person name="Rogers J."/>
            <person name="Stemple D.L."/>
        </authorList>
    </citation>
    <scope>NUCLEOTIDE SEQUENCE [LARGE SCALE GENOMIC DNA]</scope>
    <source>
        <strain>Tuebingen</strain>
    </source>
</reference>
<reference key="2">
    <citation type="journal article" date="2011" name="PLoS ONE">
        <title>Identification of RNF213 as a susceptibility gene for moyamoya disease and its possible role in vascular development.</title>
        <authorList>
            <person name="Liu W."/>
            <person name="Morito D."/>
            <person name="Takashima S."/>
            <person name="Mineharu Y."/>
            <person name="Kobayashi H."/>
            <person name="Hitomi T."/>
            <person name="Hashikata H."/>
            <person name="Matsuura N."/>
            <person name="Yamazaki S."/>
            <person name="Toyoda A."/>
            <person name="Kikuta K."/>
            <person name="Takagi Y."/>
            <person name="Harada K.H."/>
            <person name="Fujiyama A."/>
            <person name="Herzig R."/>
            <person name="Krischek B."/>
            <person name="Zou L."/>
            <person name="Kim J.E."/>
            <person name="Kitakaze M."/>
            <person name="Miyamoto S."/>
            <person name="Nagata K."/>
            <person name="Hashimoto N."/>
            <person name="Koizumi A."/>
        </authorList>
    </citation>
    <scope>DISRUPTION PHENOTYPE</scope>
</reference>
<reference key="3">
    <citation type="journal article" date="2015" name="Sci. Rep.">
        <title>Neuromuscular regulation in zebrafish by a large AAA+ ATPase/ubiquitin ligase, mysterin/RNF213.</title>
        <authorList>
            <person name="Kotani Y."/>
            <person name="Morito D."/>
            <person name="Yamazaki S."/>
            <person name="Ogino K."/>
            <person name="Kawakami K."/>
            <person name="Takashima S."/>
            <person name="Hirata H."/>
            <person name="Nagata K."/>
        </authorList>
    </citation>
    <scope>FUNCTION</scope>
    <scope>DISRUPTION PHENOTYPE</scope>
</reference>
<reference key="4">
    <citation type="journal article" date="2016" name="Brain Res.">
        <title>Mutation of rnf213a by TALEN causes abnormal angiogenesis and circulation defects in zebrafish.</title>
        <authorList>
            <person name="Wen J."/>
            <person name="Sun X."/>
            <person name="Chen H."/>
            <person name="Liu H."/>
            <person name="Lai R."/>
            <person name="Li J."/>
            <person name="Wang Y."/>
            <person name="Zhang J."/>
            <person name="Sheng W."/>
        </authorList>
    </citation>
    <scope>DISRUPTION PHENOTYPE</scope>
</reference>
<reference key="5">
    <citation type="journal article" date="2019" name="J. Cell Biol.">
        <title>The AAA+ ATPase/ubiquitin ligase mysterin stabilizes cytoplasmic lipid droplets.</title>
        <authorList>
            <person name="Sugihara M."/>
            <person name="Morito D."/>
            <person name="Ainuki S."/>
            <person name="Hirano Y."/>
            <person name="Ogino K."/>
            <person name="Kitamura A."/>
            <person name="Hirata H."/>
            <person name="Nagata K."/>
        </authorList>
    </citation>
    <scope>FUNCTION</scope>
    <scope>DISRUPTION PHENOTYPE</scope>
</reference>
<sequence>MKCPKCSHEALEKAPKFCSECGHKLQSQSYETTQGTPHDKSQTPSIVPQITNAEMDETGSESKSLEIQNANVSPKRPNENTSPNPKKKKRKKRKKEKKKKSGVSEGPSSLTSDLSDISLTDKEKKMDTDQSSDSDCSSCIVEDTPTPAEPSSHLSPPENETAGPAQLSASALTTGSSKDGEESIGTTQKPVSASASKAPLGVDQQTKEEKVKCKDEGQKSLSAKAQHTPNANVDQNANVQSDANIDKDSQNVEPQKSSSVKTKPSKSTVADPKKTESEKQKSGERDNENSTQPVSSPKLKRNQTEESQKMVFGPNSAPKKNRGSSADSAMKVEKKPAGGKKDSSADQKSKESEDTESQCVTLPKRNTRSTQHISSSDRLTIYFHAVLSKDFKFNPEEDLIFIRAGGPIGNWEENLVELSVSRDLKEHGFLVEGKFICRKIDAEAVSIPYKYVVYKQKKNKYDYEYIYKLDAEVPTNRCLFIKSHLLNDEGEWHQYDDIICAQPAKNMFEWVKKTIWSDEKKNVLQGRKIAGTIMLETIFDLLRSWSKINLNNFFSQLRQFYEIYRNPFVFEKKQTKWYQLDYDEKDVRELLKNFMLMHVTPELQKDSNEKSKFIQEPLKAGLIMLYVWKQYDLKLDYGTLSRLCTAVCLPNLPKDEFLSLWTDITESFSVINSFSDMVEALISKLKAENMPRWIIVIPLLHLLKGTSKPFEQVITKVNSKYEQSWAGLQGLRSNILSPGPQERRAMLNLMKTYGHLVEVDRLLIRSWMYLMPLDDLVECGSIFPVELLDILQLFTMKCPNNISFTSSESTAEALAHIQSQLLQHRYSCPDVDYGIQCIQAACKLLEKICSLVRYFGHSQNFTDIPVACMNLVASVSGFAQTKQEADTFAEKTLVLLNDTKQTVRAWMRQTFKGRLLNSHLFSSHLTGTSFSTETEVWNNIIAIDFVCKDFIKEWRDTFTTDFEGKYQQEDHLDQIEAYCSNIEKLKVSQPYLVNSVEKCALQAVSTICQTKSEWKLFARFNKFRINWRFGNLVSTIILKSWPKDDKGTYFEEEEAVLKHLLGWAAAKNIFQLHGADEKLIDQLSDEAKEKFAMATSLFTNVLNQLVTGKIKMKLLNHILEKKSVFLELLTLDCFSEEEQYKDIDAMKALIQTRQEEVKAIYHERALAGALIAMCHNVEEHVKVDYKYLEDLYSNDMNEMDLDLFMDVHELNQIPTEASLEVPYFELQDDVRSMAEILNIFKDSYIFKLRWGNEAALFVERAEDEELDELDELPITLDVLNEEIFLPCHAAYRNIYTSLKDGSIDFEDIDEIFRAYKGKYEKLAAEVAIMSKQDFNDDQHWVQTRIQQIKQYHELHLAVESAKVVMMVKETLCLQGDFQVLEKLLITTHSDFKSERLDSIDNELIQAKNVLVDITEPRRLCLQELGHRKNFVIWVKEALEDINELKVFVDLASISAGENDLDVDRVACFHDAVLGYSSMLYDLKPDAGFSLFNEMLKKLWKALDNDSNLPKKLCDSARHIEWLKTVKDSHGSVELSSLSLASAINSKGIYVINAQNQKKLALENILKLHIMEEHDGGCETRVYSLEDLRDLQNKLMLMSGKGEQGQCEVDQFAEVFASVQRLVSAFIDLYVAGNPLFRHWEANINCNSKEACIIIDFNLGSVVSVVMVEGDVTEQLPEVCKKMESCLRFWQDFMDKQRSQHYYLNYYTAEQLVYLCHQLAHNNMEEIDDQVLMMLSFIKPSCSTSDLRKAWHILQYDLIRKGPDQNDDLDFQTFVEVSSMTENESTEKSCPTSDDLIQQLGDASGSTKLGVIWNNYMRDMKAFLPDSLDVPSLGYLLEILANSHREDEGDMSQRDKTRTILRELPNGIASGRPNLIICPSEEILISCISIYMNSKNEPLPTYDEVLLCSATTPYEEVELFLRRCLSAGYRGKKIYTMLYVNQLNYEVSYKVEKFFQNQNAHTTNDYRLVLICESNKEHAYLPSAFSQFRLHLIPQQPIPSIQQYLHRHFAVPVGISSAAAVFKDRQNVGVVSSERSGVGKSLYIKRLYEKLKLNSKKPSQLKCIRLTEPKVDENVIIQSLISVLKKNDLSVYHFDVTTMVKKGLHEFLFRLLILGYLMDSKGNMWKSSNKHLYVIEILRPGLSQNDRRAGAKVSFNFLDVFPIVYCRSPKEVLELEMRMEEHPSFGLSDDPLMDDQEFRSEAYQRPYQYLQRFYNGINLDEFLYQGVEGSHVECLQMLFEYCGIIDPSWAELRNFAWFLNLQLQDCEKSVFCDFSFVGDTLLGFKNFVVEFMILMAKDFATPSLSISDQSPGRLHEDFSSANEEDLAPFKIRKRWESEPHPYIFFNDDHDSMTFIGFHLQPNAQKGVDAVDPSNNRVIKQNIMTMELYEGLKLQRVPFNIDFDQLPRWEKIERLSRVLGIQWPLDPDETYELTTDNMLKMLAVHMRFRCGIPVIIMGETGCGKTRLIKFLCEMHRSGVATDNMKLVKVHGGTSSEMIYTKVREAEAMALRNKLDYGFDTVLFFDEANTTEAISSIKEILCDNSAEGQNLTENTGLKIIAACNPYRKHTDVMIKRLESAGLGYRVRAEETDEKLGSIPLRQLVYRVQALPPSMIPLIWDFGQLNDHTEKMYIKQIVERVAETHSIDSGYITVITDVLSASQKYMRTRQDECSFVSLRDVERCMQVFGWFYKKHLMLLSELDKFESIQRTEKTDQHPKDTDERNPILWSLLMAVGVCYHACLEDKEKYRKKICKYFPAAYSPMKVMQEISVIQDIFLEGVPMGENIARNNALKENVFMMVICIELRIPLFLVGKPGSSKSLSKTLVADGMQGQAAHSDLFRKLKQIHLVSFQCSPHSTPEGIINTFKQCARFQEGKNLSEYVSVVVLDEIGLAEDSQKMPLKTLHPLLEEGCIDDQPSPHKKVGFIGISNWALDPAKMNRGIFVSRGDPDENELIESAKGICSSDVMILEKVRECFKPFAHAYLRICKKQEKGFFGLRDYYSLIKMMFAVAKACDQKPSAEQIVKAVLRNFSGKDDVDAVTFFTSRLNIKPELETISAIELVRENVTAIGQDEECRYLLVLTKNYAALRILQQTFFSDQCQPEIIFGSSFPKDQEYTQICRNINRVKICMETGQTIVLLNLQNLYESLYDALNQYYVTLGGQKYVDLGLGTHRVKCRVHKDFRLIVIEEKDIVYKQFPIPLINRLEKHYLDLNTLLKSEQKDIVKNLEQWVQCFTDVKNKHSVAPSARRYSPADAFIGYHTDTCASVVMQVTEQLKGQELSDPRKGILDESKLILLNCATPDAVVRLDCTSLFNVESEHLSRVYFEDQMHNSLAEFILSHIQQEGCSGAFFTEVTTFSRLLTASETQQLQNVVQNIELLSLQQFDTEQSFLKKIKNYLENTTGDKILLIQTDFDEGFQKLNVIASAKYSSINEINKFKKEGSGKIFVYFITKLPRMDGGTSYIGFNGGPWKSIHIDDLRRPKDIVSDIKALQGLTISQLFEEKAEKVDETEAMEVEDMYAGGEDEEDEEKMELEENNGCKDVLDTTALVRSCVQSAVGMLRDQTEGGMRSTKRVEILLMLLAEDQTLQAEFLKTLKTRLHSLLVAHDDNTISAKSWVSREALNVDALHEGGTFRHALWRRVQAVVTPFLAQLVSVVDRDCNLDLLLDRNSGEPLKKLWLEIFRDDKFLSVSPYTRTENNSATKTILVQNYMSVDRNKGCTMPFSWRIKDYLEDLWKHALQQEGHTVKQFEEFFWKTPLGRYISEATNEMQMEFFYRYLQDFISMTMNVTSEVDFEVLRGAFTSSVNEVRIAHEAHESEALSLVWIHVAYHHFKNRIQNLHRMMSLEPQISQMLLENRYASEGKELVLDVLAAVACIEYLEPQNLDGDDQSLAWLRRVKKLQVPVELVCSLESLHNRGDRCRQMVTNIQHGWRRIYSLVLFVEHMLLGVGDLQQKLKPVVLEHTQLLAQVLEQDSNLKKKKPFEAVITVLKTCKDKASQRIIRFGLQLCPVCMGDPRDPLSLPCDHIYCLTCIRQWLVPGQMHCPLCVQEVPDNFELKPSDELRRLISQNASFRMRCNAFFIDLVSTMCFKDNTPPSKDIILHLLSLLMVEASSLPPFKGRDRRFLTKALSPFDDSVDKNPVVRSVVLKLLLNYSFDHVKDYLQQHLTEVEQSKILEETDKAELYCLYMNCLEDSMYDRTQWHTVAEQQNCFLEETRFLLEFLQSDSVSAHTATVEHLQRLARVRLCLDMAADLLVANAGIHDDPSAFIQAFWNNVVNLCRQSRNDWYRVYLIRKLCSLQGVECVKNLLLQETYRWLFPQEILEMNQDDSQIDQYLACGADYKTIRDAVAKFMLDLHINGIQKAIEDCNCTPMKKAVYVLMAFFREVTSLHRTGNPNMHPKPEHCAGLEHFIKNSAIFVNNEMKAFAEKLVRNQLGALRVRPHMPSRDLSLVEVTIHMAAVLLCGNLLLLQPLQKLALSPNNMMASFIPTMPDDMLAVAQQAMGHLQWYFCPNGHPCTVGECGQPMEVSRCPDCDAEIGGSNHRPVDGFRAMQIQADRTQSGHILGDAQRRDLPDMQDTKNMSPAPFALLRLLTHMSMLIGTQNNPQSIMQIIKPAVVHPDAFLMQHLLKDMEQLSKALGKGVDDTVSTIHLAIHSLLEPHQTSQWPDPYDPNLSTKDARNGWENAMNNDVITHHLKVLEHQLKEVNAFIREDERVSSNPVMKLTFGEPGRFLRSLPQNSLIHNSSIWSCRNKVSLMSLTHIVEQNNGRDTLPVLWRFLQREAELRLVRFLPDILVLQRDLVKKFQNITDLTYKTIREFLQDQKAASLTAWYEKRIKIFLTTWNQIRVSLANTGEIKLPADYTEKDLGLDADLQVLLPQRRGLGLCSTALVSYLITIHNDLMYTVEKHTGDDSDYKISPAELTELHVIRYEYDRDLLPLVLANCQYSMECGQETLLEYDLPKIQQQILTRFLQGKPLITINGIPTLVNRQDRNYEIIFKDVKGKVQQELLQPLTQYDLVKELQSYSDVCEALSTVELAVGFLAMTGGEPNMQLGVYLKDVLQMTDHMATHVFKALSRCSLKHCVALWQLLSSLKSETMLRLKRDPFVGISKEYKQPLQEEHKRLLTSFFTKSSADAFLLEMHEFLLLVLKSPKATDTYRPDWRLKHTVVSYMERKDLDVPPEVEEFFPKEILLSEYTSTWNFSVNLRQKRSQS</sequence>
<gene>
    <name evidence="12" type="primary">rnf213a</name>
</gene>
<protein>
    <recommendedName>
        <fullName evidence="14">E3 ubiquitin-protein ligase rnf213-alpha</fullName>
        <ecNumber evidence="2">2.3.2.27</ecNumber>
        <ecNumber evidence="2">3.6.4.-</ecNumber>
    </recommendedName>
    <alternativeName>
        <fullName evidence="14">E3 ubiquitin-lipopolysaccharide ligase rnf213-alpha</fullName>
        <ecNumber evidence="2">2.3.2.-</ecNumber>
    </alternativeName>
    <alternativeName>
        <fullName evidence="13">Mysterin-A</fullName>
    </alternativeName>
    <alternativeName>
        <fullName evidence="11">Mysterin-alpha</fullName>
    </alternativeName>
    <alternativeName>
        <fullName evidence="14">RING finger protein 213-A</fullName>
    </alternativeName>
    <alternativeName>
        <fullName evidence="10">RING finger protein 213-alpha</fullName>
    </alternativeName>
</protein>
<accession>A0A0R4IBK5</accession>
<evidence type="ECO:0000250" key="1">
    <source>
        <dbReference type="UniProtKB" id="E9Q555"/>
    </source>
</evidence>
<evidence type="ECO:0000250" key="2">
    <source>
        <dbReference type="UniProtKB" id="Q63HN8"/>
    </source>
</evidence>
<evidence type="ECO:0000255" key="3">
    <source>
        <dbReference type="PROSITE-ProRule" id="PRU00175"/>
    </source>
</evidence>
<evidence type="ECO:0000255" key="4">
    <source>
        <dbReference type="PROSITE-ProRule" id="PRU01325"/>
    </source>
</evidence>
<evidence type="ECO:0000256" key="5">
    <source>
        <dbReference type="SAM" id="MobiDB-lite"/>
    </source>
</evidence>
<evidence type="ECO:0000269" key="6">
    <source>
    </source>
</evidence>
<evidence type="ECO:0000269" key="7">
    <source>
    </source>
</evidence>
<evidence type="ECO:0000269" key="8">
    <source>
    </source>
</evidence>
<evidence type="ECO:0000269" key="9">
    <source>
    </source>
</evidence>
<evidence type="ECO:0000303" key="10">
    <source>
    </source>
</evidence>
<evidence type="ECO:0000303" key="11">
    <source>
    </source>
</evidence>
<evidence type="ECO:0000303" key="12">
    <source>
    </source>
</evidence>
<evidence type="ECO:0000303" key="13">
    <source>
    </source>
</evidence>
<evidence type="ECO:0000305" key="14"/>
<keyword id="KW-0037">Angiogenesis</keyword>
<keyword id="KW-0067">ATP-binding</keyword>
<keyword id="KW-0963">Cytoplasm</keyword>
<keyword id="KW-0378">Hydrolase</keyword>
<keyword id="KW-0391">Immunity</keyword>
<keyword id="KW-0551">Lipid droplet</keyword>
<keyword id="KW-0443">Lipid metabolism</keyword>
<keyword id="KW-0479">Metal-binding</keyword>
<keyword id="KW-0511">Multifunctional enzyme</keyword>
<keyword id="KW-0547">Nucleotide-binding</keyword>
<keyword id="KW-1185">Reference proteome</keyword>
<keyword id="KW-0808">Transferase</keyword>
<keyword id="KW-0833">Ubl conjugation pathway</keyword>
<keyword id="KW-0862">Zinc</keyword>
<keyword id="KW-0863">Zinc-finger</keyword>